<evidence type="ECO:0000269" key="1">
    <source>
    </source>
</evidence>
<evidence type="ECO:0000305" key="2"/>
<organism>
    <name type="scientific">Amia calva</name>
    <name type="common">Bowfin</name>
    <dbReference type="NCBI Taxonomy" id="7924"/>
    <lineage>
        <taxon>Eukaryota</taxon>
        <taxon>Metazoa</taxon>
        <taxon>Chordata</taxon>
        <taxon>Craniata</taxon>
        <taxon>Vertebrata</taxon>
        <taxon>Euteleostomi</taxon>
        <taxon>Actinopterygii</taxon>
        <taxon>Neopterygii</taxon>
        <taxon>Holostei</taxon>
        <taxon>Amiiformes</taxon>
        <taxon>Amiidae</taxon>
        <taxon>Amia</taxon>
    </lineage>
</organism>
<feature type="peptide" id="PRO_0000044812" description="Peptide YY-like">
    <location>
        <begin position="1"/>
        <end position="36"/>
    </location>
</feature>
<feature type="modified residue" description="Tyrosine amide" evidence="1">
    <location>
        <position position="36"/>
    </location>
</feature>
<reference key="1">
    <citation type="journal article" date="1991" name="Peptides">
        <title>Neuropeptide Y-related peptides from the pancreas of a teleostean (eel), holostean (bowfin) and elasmobranch (skate) fish.</title>
        <authorList>
            <person name="Conlon J.M."/>
            <person name="Bjenning C."/>
            <person name="Moon T.W."/>
            <person name="Youson J.H."/>
            <person name="Thim L."/>
        </authorList>
    </citation>
    <scope>PROTEIN SEQUENCE</scope>
    <scope>AMIDATION AT TYR-36</scope>
    <source>
        <tissue>Pancreas</tissue>
    </source>
</reference>
<comment type="subcellular location">
    <subcellularLocation>
        <location>Secreted</location>
    </subcellularLocation>
</comment>
<comment type="similarity">
    <text evidence="2">Belongs to the NPY family.</text>
</comment>
<protein>
    <recommendedName>
        <fullName>Peptide YY-like</fullName>
        <shortName>PYY</shortName>
    </recommendedName>
</protein>
<name>PYY_AMICA</name>
<accession>P29205</accession>
<gene>
    <name type="primary">pyy</name>
</gene>
<sequence>YPPKPENPGEDAPPEELARYYTALRHYINLITRQRY</sequence>
<dbReference type="SMR" id="P29205"/>
<dbReference type="GO" id="GO:0005615">
    <property type="term" value="C:extracellular space"/>
    <property type="evidence" value="ECO:0007669"/>
    <property type="project" value="TreeGrafter"/>
</dbReference>
<dbReference type="GO" id="GO:0005184">
    <property type="term" value="F:neuropeptide hormone activity"/>
    <property type="evidence" value="ECO:0007669"/>
    <property type="project" value="TreeGrafter"/>
</dbReference>
<dbReference type="GO" id="GO:0031841">
    <property type="term" value="F:neuropeptide Y receptor binding"/>
    <property type="evidence" value="ECO:0007669"/>
    <property type="project" value="TreeGrafter"/>
</dbReference>
<dbReference type="GO" id="GO:0007631">
    <property type="term" value="P:feeding behavior"/>
    <property type="evidence" value="ECO:0007669"/>
    <property type="project" value="TreeGrafter"/>
</dbReference>
<dbReference type="GO" id="GO:0007218">
    <property type="term" value="P:neuropeptide signaling pathway"/>
    <property type="evidence" value="ECO:0007669"/>
    <property type="project" value="TreeGrafter"/>
</dbReference>
<dbReference type="CDD" id="cd00126">
    <property type="entry name" value="PAH"/>
    <property type="match status" value="1"/>
</dbReference>
<dbReference type="Gene3D" id="6.10.250.900">
    <property type="match status" value="1"/>
</dbReference>
<dbReference type="InterPro" id="IPR001955">
    <property type="entry name" value="Pancreatic_hormone-like"/>
</dbReference>
<dbReference type="InterPro" id="IPR020392">
    <property type="entry name" value="Pancreatic_hormone-like_CS"/>
</dbReference>
<dbReference type="PANTHER" id="PTHR10533">
    <property type="entry name" value="NEUROPEPTIDE Y/PANCREATIC HORMONE/PEPTIDE YY"/>
    <property type="match status" value="1"/>
</dbReference>
<dbReference type="PANTHER" id="PTHR10533:SF14">
    <property type="entry name" value="PEPTIDE YY-RELATED"/>
    <property type="match status" value="1"/>
</dbReference>
<dbReference type="Pfam" id="PF00159">
    <property type="entry name" value="Hormone_3"/>
    <property type="match status" value="1"/>
</dbReference>
<dbReference type="PRINTS" id="PR00278">
    <property type="entry name" value="PANCHORMONE"/>
</dbReference>
<dbReference type="SMART" id="SM00309">
    <property type="entry name" value="PAH"/>
    <property type="match status" value="1"/>
</dbReference>
<dbReference type="PROSITE" id="PS00265">
    <property type="entry name" value="PANCREATIC_HORMONE_1"/>
    <property type="match status" value="1"/>
</dbReference>
<dbReference type="PROSITE" id="PS50276">
    <property type="entry name" value="PANCREATIC_HORMONE_2"/>
    <property type="match status" value="1"/>
</dbReference>
<proteinExistence type="evidence at protein level"/>
<keyword id="KW-0027">Amidation</keyword>
<keyword id="KW-0903">Direct protein sequencing</keyword>
<keyword id="KW-0372">Hormone</keyword>
<keyword id="KW-0964">Secreted</keyword>